<sequence length="765" mass="88214">MSSARDLIKVDIEWGMERLVRAQQVVELRPYDIESWSVMIREAQTRPIHEVRSLYESLVNVFPTTARYWKLYIEMEMRSRYYERVEKLFQRCLVKILNIDLWKLYLTYVKETKSGLSTHKEKMAQAYDFALEKIGMDLHSFSIWQDYIYFLRGVEAVGNYAENQKITAVRRVYQKAVVTPIVGIEQLWKDYIAFEQNINPIISEKMSLERSKDYMNARRVAKELEYHTKGLNRNLPAVPPTLTKEEVKQVELWKRFITYEKSNPLRTEDTALVTRRVMFATEQCLLVLTHHPAVWHQASQFLDTSARVLTEKGVRTSVENISPILCVPVVNQIEWVMAFAWWWAKDVQAAKIFADECANILERSINGVLNRNALLYFAYADFEEGRLKYEKVHTMYNKLLQLPDIDPTLVYVQYMKFARRAEGIKSARSIFKKAREDVRSRYHIFVAAALMEYYCSKDKEIAFRIFELGLKRFGGSPEYVMCYIDYLSHLNEDNNTRVLFERVLSSGGLSPHKSVEVWNRFLEFESNIGDLSSIVKVERRRSAVFENLKEYEGKETAQLVDRYKFLDLYPCTSTELKSIGYAENVGIILNKVGGGAQSQNTGEVETDSEATPPLPRPDFSQMIPFKPRPCAHPGAHPLAGGVFPQPPALAALCATLPPPNSFRGPFVSVELLFDIFMRLNLPDSAPQPNGDNELSPKIFDLAKSVHWIVDTSTYTGVQHSVTAVPPRRRRLLPGGDDSDDELQTAVPPSHDIYRLRQLKRFAKSN</sequence>
<dbReference type="EMBL" id="X62679">
    <property type="protein sequence ID" value="CAA44551.1"/>
    <property type="molecule type" value="Genomic_DNA"/>
</dbReference>
<dbReference type="EMBL" id="X62679">
    <property type="protein sequence ID" value="CAA44552.1"/>
    <property type="status" value="ALT_SEQ"/>
    <property type="molecule type" value="Genomic_DNA"/>
</dbReference>
<dbReference type="EMBL" id="AE014298">
    <property type="protein sequence ID" value="EAA46201.1"/>
    <property type="molecule type" value="Genomic_DNA"/>
</dbReference>
<dbReference type="EMBL" id="AE014298">
    <property type="protein sequence ID" value="EDP28024.1"/>
    <property type="molecule type" value="Genomic_DNA"/>
</dbReference>
<dbReference type="EMBL" id="AE014298">
    <property type="protein sequence ID" value="EDP28025.2"/>
    <property type="molecule type" value="Genomic_DNA"/>
</dbReference>
<dbReference type="EMBL" id="BT012671">
    <property type="protein sequence ID" value="AAT09321.1"/>
    <property type="molecule type" value="mRNA"/>
</dbReference>
<dbReference type="EMBL" id="BT021384">
    <property type="protein sequence ID" value="AAX33532.1"/>
    <property type="molecule type" value="mRNA"/>
</dbReference>
<dbReference type="EMBL" id="AY102664">
    <property type="protein sequence ID" value="AAM27493.1"/>
    <property type="status" value="ALT_SEQ"/>
    <property type="molecule type" value="mRNA"/>
</dbReference>
<dbReference type="PIR" id="A46389">
    <property type="entry name" value="A46389"/>
</dbReference>
<dbReference type="PIR" id="B46389">
    <property type="entry name" value="B46389"/>
</dbReference>
<dbReference type="RefSeq" id="NP_001015241.3">
    <molecule id="P25991-1"/>
    <property type="nucleotide sequence ID" value="NM_001015241.4"/>
</dbReference>
<dbReference type="RefSeq" id="NP_001104479.1">
    <molecule id="P25991-4"/>
    <property type="nucleotide sequence ID" value="NM_001111009.4"/>
</dbReference>
<dbReference type="RefSeq" id="NP_001104480.2">
    <molecule id="P25991-4"/>
    <property type="nucleotide sequence ID" value="NM_001111010.3"/>
</dbReference>
<dbReference type="SMR" id="P25991"/>
<dbReference type="BioGRID" id="78119">
    <property type="interactions" value="7"/>
</dbReference>
<dbReference type="DIP" id="DIP-22591N"/>
<dbReference type="FunCoup" id="P25991">
    <property type="interactions" value="2397"/>
</dbReference>
<dbReference type="IntAct" id="P25991">
    <property type="interactions" value="5"/>
</dbReference>
<dbReference type="STRING" id="7227.FBpp0297502"/>
<dbReference type="iPTMnet" id="P25991"/>
<dbReference type="PaxDb" id="7227-FBpp0112455"/>
<dbReference type="EnsemblMetazoa" id="FBtr0113733">
    <molecule id="P25991-4"/>
    <property type="protein sequence ID" value="FBpp0112456"/>
    <property type="gene ID" value="FBgn0003559"/>
</dbReference>
<dbReference type="EnsemblMetazoa" id="FBtr0306544">
    <molecule id="P25991-1"/>
    <property type="protein sequence ID" value="FBpp0297502"/>
    <property type="gene ID" value="FBgn0003559"/>
</dbReference>
<dbReference type="EnsemblMetazoa" id="FBtr0306545">
    <molecule id="P25991-4"/>
    <property type="protein sequence ID" value="FBpp0297503"/>
    <property type="gene ID" value="FBgn0003559"/>
</dbReference>
<dbReference type="GeneID" id="3354994"/>
<dbReference type="KEGG" id="dme:Dmel_CG17170"/>
<dbReference type="UCSC" id="CG17170-RE">
    <property type="organism name" value="d. melanogaster"/>
</dbReference>
<dbReference type="AGR" id="FB:FBgn0003559"/>
<dbReference type="CTD" id="3354994"/>
<dbReference type="FlyBase" id="FBgn0003559">
    <property type="gene designation" value="su(f)"/>
</dbReference>
<dbReference type="VEuPathDB" id="VectorBase:FBgn0003559"/>
<dbReference type="eggNOG" id="KOG1914">
    <property type="taxonomic scope" value="Eukaryota"/>
</dbReference>
<dbReference type="GeneTree" id="ENSGT00390000006758"/>
<dbReference type="InParanoid" id="P25991"/>
<dbReference type="OMA" id="CFRGPFV"/>
<dbReference type="OrthoDB" id="26282at2759"/>
<dbReference type="PhylomeDB" id="P25991"/>
<dbReference type="Reactome" id="R-DME-72187">
    <property type="pathway name" value="mRNA 3'-end processing"/>
</dbReference>
<dbReference type="Reactome" id="R-DME-72203">
    <property type="pathway name" value="Processing of Capped Intron-Containing Pre-mRNA"/>
</dbReference>
<dbReference type="Reactome" id="R-DME-73856">
    <property type="pathway name" value="RNA Polymerase II Transcription Termination"/>
</dbReference>
<dbReference type="Reactome" id="R-DME-77595">
    <property type="pathway name" value="Processing of Intronless Pre-mRNAs"/>
</dbReference>
<dbReference type="BioGRID-ORCS" id="3354994">
    <property type="hits" value="1 hit in 1 CRISPR screen"/>
</dbReference>
<dbReference type="GenomeRNAi" id="3354994"/>
<dbReference type="PRO" id="PR:P25991"/>
<dbReference type="Proteomes" id="UP000000803">
    <property type="component" value="Chromosome X"/>
</dbReference>
<dbReference type="Bgee" id="FBgn0003559">
    <property type="expression patterns" value="Expressed in polar follicle cell (Drosophila) in ovary and 160 other cell types or tissues"/>
</dbReference>
<dbReference type="GO" id="GO:0005848">
    <property type="term" value="C:mRNA cleavage stimulating factor complex"/>
    <property type="evidence" value="ECO:0000314"/>
    <property type="project" value="FlyBase"/>
</dbReference>
<dbReference type="GO" id="GO:0005634">
    <property type="term" value="C:nucleus"/>
    <property type="evidence" value="ECO:0000318"/>
    <property type="project" value="GO_Central"/>
</dbReference>
<dbReference type="GO" id="GO:0003729">
    <property type="term" value="F:mRNA binding"/>
    <property type="evidence" value="ECO:0000318"/>
    <property type="project" value="GO_Central"/>
</dbReference>
<dbReference type="GO" id="GO:0031124">
    <property type="term" value="P:mRNA 3'-end processing"/>
    <property type="evidence" value="ECO:0007669"/>
    <property type="project" value="InterPro"/>
</dbReference>
<dbReference type="GO" id="GO:0031123">
    <property type="term" value="P:RNA 3'-end processing"/>
    <property type="evidence" value="ECO:0000318"/>
    <property type="project" value="GO_Central"/>
</dbReference>
<dbReference type="Gene3D" id="1.25.40.1040">
    <property type="match status" value="2"/>
</dbReference>
<dbReference type="InterPro" id="IPR003107">
    <property type="entry name" value="HAT"/>
</dbReference>
<dbReference type="InterPro" id="IPR045243">
    <property type="entry name" value="Rna14-like"/>
</dbReference>
<dbReference type="InterPro" id="IPR008847">
    <property type="entry name" value="Suf"/>
</dbReference>
<dbReference type="InterPro" id="IPR011990">
    <property type="entry name" value="TPR-like_helical_dom_sf"/>
</dbReference>
<dbReference type="PANTHER" id="PTHR19980:SF0">
    <property type="entry name" value="CLEAVAGE STIMULATION FACTOR SUBUNIT 3"/>
    <property type="match status" value="1"/>
</dbReference>
<dbReference type="PANTHER" id="PTHR19980">
    <property type="entry name" value="RNA CLEAVAGE STIMULATION FACTOR"/>
    <property type="match status" value="1"/>
</dbReference>
<dbReference type="Pfam" id="PF05843">
    <property type="entry name" value="Suf"/>
    <property type="match status" value="1"/>
</dbReference>
<dbReference type="SMART" id="SM00386">
    <property type="entry name" value="HAT"/>
    <property type="match status" value="10"/>
</dbReference>
<dbReference type="SUPFAM" id="SSF48452">
    <property type="entry name" value="TPR-like"/>
    <property type="match status" value="1"/>
</dbReference>
<feature type="chain" id="PRO_0000205764" description="Protein suppressor of forked">
    <location>
        <begin position="1"/>
        <end position="765"/>
    </location>
</feature>
<feature type="repeat" description="HAT 1">
    <location>
        <begin position="46"/>
        <end position="78"/>
    </location>
</feature>
<feature type="repeat" description="HAT 2">
    <location>
        <begin position="80"/>
        <end position="111"/>
    </location>
</feature>
<feature type="repeat" description="HAT 3">
    <location>
        <begin position="118"/>
        <end position="153"/>
    </location>
</feature>
<feature type="repeat" description="HAT 4">
    <location>
        <begin position="164"/>
        <end position="197"/>
    </location>
</feature>
<feature type="repeat" description="HAT 5">
    <location>
        <begin position="230"/>
        <end position="262"/>
    </location>
</feature>
<feature type="repeat" description="HAT 6">
    <location>
        <begin position="387"/>
        <end position="420"/>
    </location>
</feature>
<feature type="repeat" description="HAT 7">
    <location>
        <begin position="491"/>
        <end position="527"/>
    </location>
</feature>
<feature type="region of interest" description="Disordered" evidence="1">
    <location>
        <begin position="595"/>
        <end position="615"/>
    </location>
</feature>
<feature type="region of interest" description="Disordered" evidence="1">
    <location>
        <begin position="727"/>
        <end position="747"/>
    </location>
</feature>
<feature type="modified residue" description="Phosphoserine" evidence="2 3">
    <location>
        <position position="738"/>
    </location>
</feature>
<feature type="splice variant" id="VSP_023342" description="In isoform E." evidence="5">
    <location>
        <begin position="314"/>
        <end position="345"/>
    </location>
</feature>
<feature type="sequence conflict" description="In Ref. 5; AAM27493." evidence="6" ref="5">
    <original>DVQAAK</original>
    <variation>VKTKNE</variation>
    <location>
        <begin position="346"/>
        <end position="351"/>
    </location>
</feature>
<protein>
    <recommendedName>
        <fullName>Protein suppressor of forked</fullName>
    </recommendedName>
</protein>
<reference key="1">
    <citation type="journal article" date="1993" name="Genes Dev.">
        <title>Homology with Saccharomyces cerevisiae RNA14 suggests that phenotypic suppression in Drosophila melanogaster by suppressor of forked occurs at the level of RNA stability.</title>
        <authorList>
            <person name="Mitchelson A."/>
            <person name="Simonelig M."/>
            <person name="Williams C."/>
            <person name="O'Hare K."/>
        </authorList>
    </citation>
    <scope>NUCLEOTIDE SEQUENCE [GENOMIC DNA] (ISOFORM E)</scope>
    <scope>FUNCTION</scope>
    <scope>DEVELOPMENTAL STAGE</scope>
    <source>
        <strain>Oregon-R</strain>
    </source>
</reference>
<reference key="2">
    <citation type="journal article" date="2000" name="Science">
        <title>The genome sequence of Drosophila melanogaster.</title>
        <authorList>
            <person name="Adams M.D."/>
            <person name="Celniker S.E."/>
            <person name="Holt R.A."/>
            <person name="Evans C.A."/>
            <person name="Gocayne J.D."/>
            <person name="Amanatides P.G."/>
            <person name="Scherer S.E."/>
            <person name="Li P.W."/>
            <person name="Hoskins R.A."/>
            <person name="Galle R.F."/>
            <person name="George R.A."/>
            <person name="Lewis S.E."/>
            <person name="Richards S."/>
            <person name="Ashburner M."/>
            <person name="Henderson S.N."/>
            <person name="Sutton G.G."/>
            <person name="Wortman J.R."/>
            <person name="Yandell M.D."/>
            <person name="Zhang Q."/>
            <person name="Chen L.X."/>
            <person name="Brandon R.C."/>
            <person name="Rogers Y.-H.C."/>
            <person name="Blazej R.G."/>
            <person name="Champe M."/>
            <person name="Pfeiffer B.D."/>
            <person name="Wan K.H."/>
            <person name="Doyle C."/>
            <person name="Baxter E.G."/>
            <person name="Helt G."/>
            <person name="Nelson C.R."/>
            <person name="Miklos G.L.G."/>
            <person name="Abril J.F."/>
            <person name="Agbayani A."/>
            <person name="An H.-J."/>
            <person name="Andrews-Pfannkoch C."/>
            <person name="Baldwin D."/>
            <person name="Ballew R.M."/>
            <person name="Basu A."/>
            <person name="Baxendale J."/>
            <person name="Bayraktaroglu L."/>
            <person name="Beasley E.M."/>
            <person name="Beeson K.Y."/>
            <person name="Benos P.V."/>
            <person name="Berman B.P."/>
            <person name="Bhandari D."/>
            <person name="Bolshakov S."/>
            <person name="Borkova D."/>
            <person name="Botchan M.R."/>
            <person name="Bouck J."/>
            <person name="Brokstein P."/>
            <person name="Brottier P."/>
            <person name="Burtis K.C."/>
            <person name="Busam D.A."/>
            <person name="Butler H."/>
            <person name="Cadieu E."/>
            <person name="Center A."/>
            <person name="Chandra I."/>
            <person name="Cherry J.M."/>
            <person name="Cawley S."/>
            <person name="Dahlke C."/>
            <person name="Davenport L.B."/>
            <person name="Davies P."/>
            <person name="de Pablos B."/>
            <person name="Delcher A."/>
            <person name="Deng Z."/>
            <person name="Mays A.D."/>
            <person name="Dew I."/>
            <person name="Dietz S.M."/>
            <person name="Dodson K."/>
            <person name="Doup L.E."/>
            <person name="Downes M."/>
            <person name="Dugan-Rocha S."/>
            <person name="Dunkov B.C."/>
            <person name="Dunn P."/>
            <person name="Durbin K.J."/>
            <person name="Evangelista C.C."/>
            <person name="Ferraz C."/>
            <person name="Ferriera S."/>
            <person name="Fleischmann W."/>
            <person name="Fosler C."/>
            <person name="Gabrielian A.E."/>
            <person name="Garg N.S."/>
            <person name="Gelbart W.M."/>
            <person name="Glasser K."/>
            <person name="Glodek A."/>
            <person name="Gong F."/>
            <person name="Gorrell J.H."/>
            <person name="Gu Z."/>
            <person name="Guan P."/>
            <person name="Harris M."/>
            <person name="Harris N.L."/>
            <person name="Harvey D.A."/>
            <person name="Heiman T.J."/>
            <person name="Hernandez J.R."/>
            <person name="Houck J."/>
            <person name="Hostin D."/>
            <person name="Houston K.A."/>
            <person name="Howland T.J."/>
            <person name="Wei M.-H."/>
            <person name="Ibegwam C."/>
            <person name="Jalali M."/>
            <person name="Kalush F."/>
            <person name="Karpen G.H."/>
            <person name="Ke Z."/>
            <person name="Kennison J.A."/>
            <person name="Ketchum K.A."/>
            <person name="Kimmel B.E."/>
            <person name="Kodira C.D."/>
            <person name="Kraft C.L."/>
            <person name="Kravitz S."/>
            <person name="Kulp D."/>
            <person name="Lai Z."/>
            <person name="Lasko P."/>
            <person name="Lei Y."/>
            <person name="Levitsky A.A."/>
            <person name="Li J.H."/>
            <person name="Li Z."/>
            <person name="Liang Y."/>
            <person name="Lin X."/>
            <person name="Liu X."/>
            <person name="Mattei B."/>
            <person name="McIntosh T.C."/>
            <person name="McLeod M.P."/>
            <person name="McPherson D."/>
            <person name="Merkulov G."/>
            <person name="Milshina N.V."/>
            <person name="Mobarry C."/>
            <person name="Morris J."/>
            <person name="Moshrefi A."/>
            <person name="Mount S.M."/>
            <person name="Moy M."/>
            <person name="Murphy B."/>
            <person name="Murphy L."/>
            <person name="Muzny D.M."/>
            <person name="Nelson D.L."/>
            <person name="Nelson D.R."/>
            <person name="Nelson K.A."/>
            <person name="Nixon K."/>
            <person name="Nusskern D.R."/>
            <person name="Pacleb J.M."/>
            <person name="Palazzolo M."/>
            <person name="Pittman G.S."/>
            <person name="Pan S."/>
            <person name="Pollard J."/>
            <person name="Puri V."/>
            <person name="Reese M.G."/>
            <person name="Reinert K."/>
            <person name="Remington K."/>
            <person name="Saunders R.D.C."/>
            <person name="Scheeler F."/>
            <person name="Shen H."/>
            <person name="Shue B.C."/>
            <person name="Siden-Kiamos I."/>
            <person name="Simpson M."/>
            <person name="Skupski M.P."/>
            <person name="Smith T.J."/>
            <person name="Spier E."/>
            <person name="Spradling A.C."/>
            <person name="Stapleton M."/>
            <person name="Strong R."/>
            <person name="Sun E."/>
            <person name="Svirskas R."/>
            <person name="Tector C."/>
            <person name="Turner R."/>
            <person name="Venter E."/>
            <person name="Wang A.H."/>
            <person name="Wang X."/>
            <person name="Wang Z.-Y."/>
            <person name="Wassarman D.A."/>
            <person name="Weinstock G.M."/>
            <person name="Weissenbach J."/>
            <person name="Williams S.M."/>
            <person name="Woodage T."/>
            <person name="Worley K.C."/>
            <person name="Wu D."/>
            <person name="Yang S."/>
            <person name="Yao Q.A."/>
            <person name="Ye J."/>
            <person name="Yeh R.-F."/>
            <person name="Zaveri J.S."/>
            <person name="Zhan M."/>
            <person name="Zhang G."/>
            <person name="Zhao Q."/>
            <person name="Zheng L."/>
            <person name="Zheng X.H."/>
            <person name="Zhong F.N."/>
            <person name="Zhong W."/>
            <person name="Zhou X."/>
            <person name="Zhu S.C."/>
            <person name="Zhu X."/>
            <person name="Smith H.O."/>
            <person name="Gibbs R.A."/>
            <person name="Myers E.W."/>
            <person name="Rubin G.M."/>
            <person name="Venter J.C."/>
        </authorList>
    </citation>
    <scope>NUCLEOTIDE SEQUENCE [LARGE SCALE GENOMIC DNA]</scope>
    <source>
        <strain>Berkeley</strain>
    </source>
</reference>
<reference key="3">
    <citation type="journal article" date="2002" name="Genome Biol.">
        <title>Annotation of the Drosophila melanogaster euchromatic genome: a systematic review.</title>
        <authorList>
            <person name="Misra S."/>
            <person name="Crosby M.A."/>
            <person name="Mungall C.J."/>
            <person name="Matthews B.B."/>
            <person name="Campbell K.S."/>
            <person name="Hradecky P."/>
            <person name="Huang Y."/>
            <person name="Kaminker J.S."/>
            <person name="Millburn G.H."/>
            <person name="Prochnik S.E."/>
            <person name="Smith C.D."/>
            <person name="Tupy J.L."/>
            <person name="Whitfield E.J."/>
            <person name="Bayraktaroglu L."/>
            <person name="Berman B.P."/>
            <person name="Bettencourt B.R."/>
            <person name="Celniker S.E."/>
            <person name="de Grey A.D.N.J."/>
            <person name="Drysdale R.A."/>
            <person name="Harris N.L."/>
            <person name="Richter J."/>
            <person name="Russo S."/>
            <person name="Schroeder A.J."/>
            <person name="Shu S.Q."/>
            <person name="Stapleton M."/>
            <person name="Yamada C."/>
            <person name="Ashburner M."/>
            <person name="Gelbart W.M."/>
            <person name="Rubin G.M."/>
            <person name="Lewis S.E."/>
        </authorList>
    </citation>
    <scope>GENOME REANNOTATION</scope>
    <source>
        <strain>Berkeley</strain>
    </source>
</reference>
<reference key="4">
    <citation type="submission" date="2005-03" db="EMBL/GenBank/DDBJ databases">
        <authorList>
            <person name="Stapleton M."/>
            <person name="Carlson J.W."/>
            <person name="Chavez C."/>
            <person name="Frise E."/>
            <person name="George R.A."/>
            <person name="Pacleb J.M."/>
            <person name="Park S."/>
            <person name="Wan K.H."/>
            <person name="Yu C."/>
            <person name="Rubin G.M."/>
            <person name="Celniker S.E."/>
        </authorList>
    </citation>
    <scope>NUCLEOTIDE SEQUENCE [LARGE SCALE MRNA] (ISOFORM E)</scope>
    <source>
        <strain>Berkeley</strain>
        <tissue>Embryo</tissue>
    </source>
</reference>
<reference key="5">
    <citation type="journal article" date="2002" name="Genome Biol.">
        <title>A Drosophila full-length cDNA resource.</title>
        <authorList>
            <person name="Stapleton M."/>
            <person name="Carlson J.W."/>
            <person name="Brokstein P."/>
            <person name="Yu C."/>
            <person name="Champe M."/>
            <person name="George R.A."/>
            <person name="Guarin H."/>
            <person name="Kronmiller B."/>
            <person name="Pacleb J.M."/>
            <person name="Park S."/>
            <person name="Wan K.H."/>
            <person name="Rubin G.M."/>
            <person name="Celniker S.E."/>
        </authorList>
    </citation>
    <scope>NUCLEOTIDE SEQUENCE [LARGE SCALE MRNA] OF 1-351 (ISOFORMS B/E)</scope>
    <source>
        <strain>Berkeley</strain>
        <tissue>Head</tissue>
    </source>
</reference>
<reference key="6">
    <citation type="journal article" date="2007" name="Mol. Biosyst.">
        <title>An integrated chemical, mass spectrometric and computational strategy for (quantitative) phosphoproteomics: application to Drosophila melanogaster Kc167 cells.</title>
        <authorList>
            <person name="Bodenmiller B."/>
            <person name="Mueller L.N."/>
            <person name="Pedrioli P.G.A."/>
            <person name="Pflieger D."/>
            <person name="Juenger M.A."/>
            <person name="Eng J.K."/>
            <person name="Aebersold R."/>
            <person name="Tao W.A."/>
        </authorList>
    </citation>
    <scope>PHOSPHORYLATION [LARGE SCALE ANALYSIS] AT SER-738</scope>
    <scope>IDENTIFICATION BY MASS SPECTROMETRY</scope>
</reference>
<reference key="7">
    <citation type="journal article" date="2008" name="J. Proteome Res.">
        <title>Phosphoproteome analysis of Drosophila melanogaster embryos.</title>
        <authorList>
            <person name="Zhai B."/>
            <person name="Villen J."/>
            <person name="Beausoleil S.A."/>
            <person name="Mintseris J."/>
            <person name="Gygi S.P."/>
        </authorList>
    </citation>
    <scope>PHOSPHORYLATION [LARGE SCALE ANALYSIS] AT SER-738</scope>
    <scope>IDENTIFICATION BY MASS SPECTROMETRY</scope>
    <source>
        <tissue>Embryo</tissue>
    </source>
</reference>
<organism>
    <name type="scientific">Drosophila melanogaster</name>
    <name type="common">Fruit fly</name>
    <dbReference type="NCBI Taxonomy" id="7227"/>
    <lineage>
        <taxon>Eukaryota</taxon>
        <taxon>Metazoa</taxon>
        <taxon>Ecdysozoa</taxon>
        <taxon>Arthropoda</taxon>
        <taxon>Hexapoda</taxon>
        <taxon>Insecta</taxon>
        <taxon>Pterygota</taxon>
        <taxon>Neoptera</taxon>
        <taxon>Endopterygota</taxon>
        <taxon>Diptera</taxon>
        <taxon>Brachycera</taxon>
        <taxon>Muscomorpha</taxon>
        <taxon>Ephydroidea</taxon>
        <taxon>Drosophilidae</taxon>
        <taxon>Drosophila</taxon>
        <taxon>Sophophora</taxon>
    </lineage>
</organism>
<keyword id="KW-0025">Alternative splicing</keyword>
<keyword id="KW-0539">Nucleus</keyword>
<keyword id="KW-0597">Phosphoprotein</keyword>
<keyword id="KW-1185">Reference proteome</keyword>
<keyword id="KW-0677">Repeat</keyword>
<gene>
    <name type="primary">su(f)</name>
    <name type="ORF">CG17170</name>
</gene>
<evidence type="ECO:0000256" key="1">
    <source>
        <dbReference type="SAM" id="MobiDB-lite"/>
    </source>
</evidence>
<evidence type="ECO:0000269" key="2">
    <source>
    </source>
</evidence>
<evidence type="ECO:0000269" key="3">
    <source>
    </source>
</evidence>
<evidence type="ECO:0000269" key="4">
    <source>
    </source>
</evidence>
<evidence type="ECO:0000303" key="5">
    <source ref="4"/>
</evidence>
<evidence type="ECO:0000305" key="6"/>
<proteinExistence type="evidence at protein level"/>
<accession>P25991</accession>
<accession>A0A023GQK0</accession>
<accession>A8Y5B4</accession>
<accession>A8Y5B5</accession>
<accession>Q24539</accession>
<accession>Q5BI40</accession>
<accession>Q6NKM3</accession>
<accession>Q7PLW9</accession>
<accession>Q7PLX0</accession>
<accession>Q7PLX1</accession>
<accession>Q8MZI2</accession>
<accession>Q9W5P7</accession>
<comment type="function">
    <text evidence="4">Essential protein, may play a role in mRNA production or stability.</text>
</comment>
<comment type="subunit">
    <text>Probably interacts with an RNA-binding protein.</text>
</comment>
<comment type="subcellular location">
    <subcellularLocation>
        <location evidence="6">Nucleus</location>
    </subcellularLocation>
</comment>
<comment type="alternative products">
    <event type="alternative splicing"/>
    <isoform>
        <id>P25991-1</id>
        <name>B</name>
        <sequence type="displayed"/>
    </isoform>
    <isoform>
        <id>P25991-4</id>
        <name>E</name>
        <sequence type="described" ref="VSP_023342"/>
    </isoform>
</comment>
<comment type="developmental stage">
    <text evidence="4">Present throughout development. Most abundant in embryos, pupae and adult females.</text>
</comment>
<comment type="sequence caution" evidence="6">
    <conflict type="miscellaneous discrepancy">
        <sequence resource="EMBL-CDS" id="AAM27493"/>
    </conflict>
    <text>Contaminating sequence. Potential poly-A sequence.</text>
</comment>
<comment type="sequence caution" evidence="6">
    <conflict type="erroneous gene model prediction">
        <sequence resource="EMBL-CDS" id="CAA44552"/>
    </conflict>
</comment>
<name>SUF_DROME</name>